<organism>
    <name type="scientific">Synechococcus elongatus (strain ATCC 33912 / PCC 7942 / FACHB-805)</name>
    <name type="common">Anacystis nidulans R2</name>
    <dbReference type="NCBI Taxonomy" id="1140"/>
    <lineage>
        <taxon>Bacteria</taxon>
        <taxon>Bacillati</taxon>
        <taxon>Cyanobacteriota</taxon>
        <taxon>Cyanophyceae</taxon>
        <taxon>Synechococcales</taxon>
        <taxon>Synechococcaceae</taxon>
        <taxon>Synechococcus</taxon>
    </lineage>
</organism>
<keyword id="KW-0963">Cytoplasm</keyword>
<keyword id="KW-0664">Pyridoxine biosynthesis</keyword>
<keyword id="KW-1185">Reference proteome</keyword>
<keyword id="KW-0808">Transferase</keyword>
<protein>
    <recommendedName>
        <fullName evidence="1">Pyridoxine 5'-phosphate synthase</fullName>
        <shortName evidence="1">PNP synthase</shortName>
        <ecNumber evidence="1">2.6.99.2</ecNumber>
    </recommendedName>
</protein>
<gene>
    <name evidence="1" type="primary">pdxJ</name>
    <name type="ordered locus">Synpcc7942_1194</name>
    <name type="ORF">sef0034</name>
</gene>
<reference key="1">
    <citation type="submission" date="2002-06" db="EMBL/GenBank/DDBJ databases">
        <title>Synechococcus elongatus PCC7942 cosmid 6C3.</title>
        <authorList>
            <person name="Holtman C.K."/>
            <person name="Sandoval P."/>
            <person name="Chen Y."/>
            <person name="Socias T."/>
            <person name="Mohler B.J."/>
            <person name="McMurtry S."/>
            <person name="Gonzalez A."/>
            <person name="Salinas I."/>
            <person name="Golden S.S."/>
            <person name="Youderian P."/>
        </authorList>
    </citation>
    <scope>NUCLEOTIDE SEQUENCE [GENOMIC DNA]</scope>
</reference>
<reference key="2">
    <citation type="submission" date="2005-08" db="EMBL/GenBank/DDBJ databases">
        <title>Complete sequence of chromosome 1 of Synechococcus elongatus PCC 7942.</title>
        <authorList>
            <consortium name="US DOE Joint Genome Institute"/>
            <person name="Copeland A."/>
            <person name="Lucas S."/>
            <person name="Lapidus A."/>
            <person name="Barry K."/>
            <person name="Detter J.C."/>
            <person name="Glavina T."/>
            <person name="Hammon N."/>
            <person name="Israni S."/>
            <person name="Pitluck S."/>
            <person name="Schmutz J."/>
            <person name="Larimer F."/>
            <person name="Land M."/>
            <person name="Kyrpides N."/>
            <person name="Lykidis A."/>
            <person name="Golden S."/>
            <person name="Richardson P."/>
        </authorList>
    </citation>
    <scope>NUCLEOTIDE SEQUENCE [LARGE SCALE GENOMIC DNA]</scope>
    <source>
        <strain>ATCC 33912 / PCC 7942 / FACHB-805</strain>
    </source>
</reference>
<comment type="function">
    <text evidence="1">Catalyzes the complicated ring closure reaction between the two acyclic compounds 1-deoxy-D-xylulose-5-phosphate (DXP) and 3-amino-2-oxopropyl phosphate (1-amino-acetone-3-phosphate or AAP) to form pyridoxine 5'-phosphate (PNP) and inorganic phosphate.</text>
</comment>
<comment type="catalytic activity">
    <reaction evidence="1">
        <text>3-amino-2-oxopropyl phosphate + 1-deoxy-D-xylulose 5-phosphate = pyridoxine 5'-phosphate + phosphate + 2 H2O + H(+)</text>
        <dbReference type="Rhea" id="RHEA:15265"/>
        <dbReference type="ChEBI" id="CHEBI:15377"/>
        <dbReference type="ChEBI" id="CHEBI:15378"/>
        <dbReference type="ChEBI" id="CHEBI:43474"/>
        <dbReference type="ChEBI" id="CHEBI:57279"/>
        <dbReference type="ChEBI" id="CHEBI:57792"/>
        <dbReference type="ChEBI" id="CHEBI:58589"/>
        <dbReference type="EC" id="2.6.99.2"/>
    </reaction>
</comment>
<comment type="pathway">
    <text evidence="1">Cofactor biosynthesis; pyridoxine 5'-phosphate biosynthesis; pyridoxine 5'-phosphate from D-erythrose 4-phosphate: step 5/5.</text>
</comment>
<comment type="subunit">
    <text evidence="1">Homooctamer; tetramer of dimers.</text>
</comment>
<comment type="subcellular location">
    <subcellularLocation>
        <location evidence="1">Cytoplasm</location>
    </subcellularLocation>
</comment>
<comment type="similarity">
    <text evidence="1">Belongs to the PNP synthase family.</text>
</comment>
<comment type="sequence caution" evidence="2">
    <conflict type="erroneous initiation">
        <sequence resource="EMBL-CDS" id="AAM82709"/>
    </conflict>
</comment>
<comment type="sequence caution" evidence="2">
    <conflict type="erroneous initiation">
        <sequence resource="EMBL-CDS" id="ABB57224"/>
    </conflict>
</comment>
<accession>Q8KPR0</accession>
<accession>Q31NZ5</accession>
<evidence type="ECO:0000255" key="1">
    <source>
        <dbReference type="HAMAP-Rule" id="MF_00279"/>
    </source>
</evidence>
<evidence type="ECO:0000305" key="2"/>
<name>PDXJ_SYNE7</name>
<sequence>MPTLGVNIDHVATVRQARRTVEPDPIAAAVLAELAGAEGITAHLREDRRHIQDRDVRLLRQTVRTRLNLEMAATDEMVAIALDIRPDYVTLVPERREEVTTEGGLNVVGQRDRLALVVDQLQSAGIPVSLFIDAEPDQIAASAAIQAQWIELHTGRYAEAETEAAQAQELAALRQGCEQAIAAGLRVNAGHGLTYWNVYPVAQLPGMEELNIGHTIISRAVLVGLERAVREMKLAMQGKL</sequence>
<dbReference type="EC" id="2.6.99.2" evidence="1"/>
<dbReference type="EMBL" id="AY120853">
    <property type="protein sequence ID" value="AAM82709.1"/>
    <property type="status" value="ALT_INIT"/>
    <property type="molecule type" value="Genomic_DNA"/>
</dbReference>
<dbReference type="EMBL" id="CP000100">
    <property type="protein sequence ID" value="ABB57224.1"/>
    <property type="status" value="ALT_INIT"/>
    <property type="molecule type" value="Genomic_DNA"/>
</dbReference>
<dbReference type="RefSeq" id="WP_039755983.1">
    <property type="nucleotide sequence ID" value="NZ_JACJTX010000003.1"/>
</dbReference>
<dbReference type="SMR" id="Q8KPR0"/>
<dbReference type="STRING" id="1140.Synpcc7942_1194"/>
<dbReference type="PaxDb" id="1140-Synpcc7942_1194"/>
<dbReference type="KEGG" id="syf:Synpcc7942_1194"/>
<dbReference type="eggNOG" id="COG0854">
    <property type="taxonomic scope" value="Bacteria"/>
</dbReference>
<dbReference type="HOGENOM" id="CLU_074563_0_0_3"/>
<dbReference type="OrthoDB" id="9806590at2"/>
<dbReference type="BioCyc" id="SYNEL:SYNPCC7942_1194-MONOMER"/>
<dbReference type="UniPathway" id="UPA00244">
    <property type="reaction ID" value="UER00313"/>
</dbReference>
<dbReference type="Proteomes" id="UP000889800">
    <property type="component" value="Chromosome"/>
</dbReference>
<dbReference type="GO" id="GO:0005829">
    <property type="term" value="C:cytosol"/>
    <property type="evidence" value="ECO:0007669"/>
    <property type="project" value="TreeGrafter"/>
</dbReference>
<dbReference type="GO" id="GO:0033856">
    <property type="term" value="F:pyridoxine 5'-phosphate synthase activity"/>
    <property type="evidence" value="ECO:0007669"/>
    <property type="project" value="UniProtKB-EC"/>
</dbReference>
<dbReference type="GO" id="GO:0008615">
    <property type="term" value="P:pyridoxine biosynthetic process"/>
    <property type="evidence" value="ECO:0007669"/>
    <property type="project" value="UniProtKB-UniRule"/>
</dbReference>
<dbReference type="CDD" id="cd00003">
    <property type="entry name" value="PNPsynthase"/>
    <property type="match status" value="1"/>
</dbReference>
<dbReference type="Gene3D" id="3.20.20.70">
    <property type="entry name" value="Aldolase class I"/>
    <property type="match status" value="1"/>
</dbReference>
<dbReference type="HAMAP" id="MF_00279">
    <property type="entry name" value="PdxJ"/>
    <property type="match status" value="1"/>
</dbReference>
<dbReference type="InterPro" id="IPR013785">
    <property type="entry name" value="Aldolase_TIM"/>
</dbReference>
<dbReference type="InterPro" id="IPR004569">
    <property type="entry name" value="PyrdxlP_synth_PdxJ"/>
</dbReference>
<dbReference type="InterPro" id="IPR036130">
    <property type="entry name" value="Pyridoxine-5'_phos_synth"/>
</dbReference>
<dbReference type="NCBIfam" id="TIGR00559">
    <property type="entry name" value="pdxJ"/>
    <property type="match status" value="1"/>
</dbReference>
<dbReference type="NCBIfam" id="NF003623">
    <property type="entry name" value="PRK05265.1-1"/>
    <property type="match status" value="1"/>
</dbReference>
<dbReference type="NCBIfam" id="NF003625">
    <property type="entry name" value="PRK05265.1-3"/>
    <property type="match status" value="1"/>
</dbReference>
<dbReference type="NCBIfam" id="NF003627">
    <property type="entry name" value="PRK05265.1-5"/>
    <property type="match status" value="1"/>
</dbReference>
<dbReference type="PANTHER" id="PTHR30456">
    <property type="entry name" value="PYRIDOXINE 5'-PHOSPHATE SYNTHASE"/>
    <property type="match status" value="1"/>
</dbReference>
<dbReference type="PANTHER" id="PTHR30456:SF0">
    <property type="entry name" value="PYRIDOXINE 5'-PHOSPHATE SYNTHASE"/>
    <property type="match status" value="1"/>
</dbReference>
<dbReference type="Pfam" id="PF03740">
    <property type="entry name" value="PdxJ"/>
    <property type="match status" value="1"/>
</dbReference>
<dbReference type="SUPFAM" id="SSF63892">
    <property type="entry name" value="Pyridoxine 5'-phosphate synthase"/>
    <property type="match status" value="1"/>
</dbReference>
<feature type="chain" id="PRO_0000190133" description="Pyridoxine 5'-phosphate synthase">
    <location>
        <begin position="1"/>
        <end position="240"/>
    </location>
</feature>
<feature type="active site" description="Proton acceptor" evidence="1">
    <location>
        <position position="43"/>
    </location>
</feature>
<feature type="active site" description="Proton acceptor" evidence="1">
    <location>
        <position position="70"/>
    </location>
</feature>
<feature type="active site" description="Proton donor" evidence="1">
    <location>
        <position position="191"/>
    </location>
</feature>
<feature type="binding site" evidence="1">
    <location>
        <position position="7"/>
    </location>
    <ligand>
        <name>3-amino-2-oxopropyl phosphate</name>
        <dbReference type="ChEBI" id="CHEBI:57279"/>
    </ligand>
</feature>
<feature type="binding site" evidence="1">
    <location>
        <begin position="9"/>
        <end position="10"/>
    </location>
    <ligand>
        <name>1-deoxy-D-xylulose 5-phosphate</name>
        <dbReference type="ChEBI" id="CHEBI:57792"/>
    </ligand>
</feature>
<feature type="binding site" evidence="1">
    <location>
        <position position="18"/>
    </location>
    <ligand>
        <name>3-amino-2-oxopropyl phosphate</name>
        <dbReference type="ChEBI" id="CHEBI:57279"/>
    </ligand>
</feature>
<feature type="binding site" evidence="1">
    <location>
        <position position="45"/>
    </location>
    <ligand>
        <name>1-deoxy-D-xylulose 5-phosphate</name>
        <dbReference type="ChEBI" id="CHEBI:57792"/>
    </ligand>
</feature>
<feature type="binding site" evidence="1">
    <location>
        <position position="50"/>
    </location>
    <ligand>
        <name>1-deoxy-D-xylulose 5-phosphate</name>
        <dbReference type="ChEBI" id="CHEBI:57792"/>
    </ligand>
</feature>
<feature type="binding site" evidence="1">
    <location>
        <position position="100"/>
    </location>
    <ligand>
        <name>1-deoxy-D-xylulose 5-phosphate</name>
        <dbReference type="ChEBI" id="CHEBI:57792"/>
    </ligand>
</feature>
<feature type="binding site" evidence="1">
    <location>
        <position position="192"/>
    </location>
    <ligand>
        <name>3-amino-2-oxopropyl phosphate</name>
        <dbReference type="ChEBI" id="CHEBI:57279"/>
    </ligand>
</feature>
<feature type="binding site" evidence="1">
    <location>
        <begin position="213"/>
        <end position="214"/>
    </location>
    <ligand>
        <name>3-amino-2-oxopropyl phosphate</name>
        <dbReference type="ChEBI" id="CHEBI:57279"/>
    </ligand>
</feature>
<feature type="site" description="Transition state stabilizer" evidence="1">
    <location>
        <position position="151"/>
    </location>
</feature>
<proteinExistence type="inferred from homology"/>